<organism>
    <name type="scientific">Helicobacter pylori (strain G27)</name>
    <dbReference type="NCBI Taxonomy" id="563041"/>
    <lineage>
        <taxon>Bacteria</taxon>
        <taxon>Pseudomonadati</taxon>
        <taxon>Campylobacterota</taxon>
        <taxon>Epsilonproteobacteria</taxon>
        <taxon>Campylobacterales</taxon>
        <taxon>Helicobacteraceae</taxon>
        <taxon>Helicobacter</taxon>
    </lineage>
</organism>
<gene>
    <name evidence="1" type="primary">fliW</name>
    <name type="ordered locus">HPG27_1098</name>
</gene>
<name>FLIW_HELPG</name>
<comment type="function">
    <text evidence="1">Acts as an anti-CsrA protein, binds CsrA and prevents it from repressing translation of its target genes, one of which is flagellin. Binds to flagellin and participates in the assembly of the flagellum.</text>
</comment>
<comment type="subunit">
    <text evidence="1">Interacts with translational regulator CsrA and flagellin(s).</text>
</comment>
<comment type="subcellular location">
    <subcellularLocation>
        <location evidence="1">Cytoplasm</location>
    </subcellularLocation>
</comment>
<comment type="similarity">
    <text evidence="1">Belongs to the FliW family.</text>
</comment>
<evidence type="ECO:0000255" key="1">
    <source>
        <dbReference type="HAMAP-Rule" id="MF_01185"/>
    </source>
</evidence>
<protein>
    <recommendedName>
        <fullName evidence="1">Flagellar assembly factor FliW</fullName>
    </recommendedName>
</protein>
<keyword id="KW-1005">Bacterial flagellum biogenesis</keyword>
<keyword id="KW-0143">Chaperone</keyword>
<keyword id="KW-0963">Cytoplasm</keyword>
<keyword id="KW-1185">Reference proteome</keyword>
<keyword id="KW-0810">Translation regulation</keyword>
<dbReference type="EMBL" id="CP001173">
    <property type="protein sequence ID" value="ACI27849.1"/>
    <property type="molecule type" value="Genomic_DNA"/>
</dbReference>
<dbReference type="RefSeq" id="WP_001105854.1">
    <property type="nucleotide sequence ID" value="NC_011333.1"/>
</dbReference>
<dbReference type="SMR" id="B5Z8F0"/>
<dbReference type="KEGG" id="hpg:HPG27_1098"/>
<dbReference type="HOGENOM" id="CLU_112356_2_1_7"/>
<dbReference type="Proteomes" id="UP000001735">
    <property type="component" value="Chromosome"/>
</dbReference>
<dbReference type="GO" id="GO:0005737">
    <property type="term" value="C:cytoplasm"/>
    <property type="evidence" value="ECO:0007669"/>
    <property type="project" value="UniProtKB-SubCell"/>
</dbReference>
<dbReference type="GO" id="GO:0044780">
    <property type="term" value="P:bacterial-type flagellum assembly"/>
    <property type="evidence" value="ECO:0007669"/>
    <property type="project" value="UniProtKB-UniRule"/>
</dbReference>
<dbReference type="GO" id="GO:0006417">
    <property type="term" value="P:regulation of translation"/>
    <property type="evidence" value="ECO:0007669"/>
    <property type="project" value="UniProtKB-KW"/>
</dbReference>
<dbReference type="Gene3D" id="2.30.290.10">
    <property type="entry name" value="BH3618-like"/>
    <property type="match status" value="1"/>
</dbReference>
<dbReference type="HAMAP" id="MF_01185">
    <property type="entry name" value="FliW"/>
    <property type="match status" value="1"/>
</dbReference>
<dbReference type="InterPro" id="IPR003775">
    <property type="entry name" value="Flagellar_assembly_factor_FliW"/>
</dbReference>
<dbReference type="InterPro" id="IPR024046">
    <property type="entry name" value="Flagellar_assmbl_FliW_dom_sf"/>
</dbReference>
<dbReference type="NCBIfam" id="NF009791">
    <property type="entry name" value="PRK13283.1"/>
    <property type="match status" value="1"/>
</dbReference>
<dbReference type="PANTHER" id="PTHR39190">
    <property type="entry name" value="FLAGELLAR ASSEMBLY FACTOR FLIW"/>
    <property type="match status" value="1"/>
</dbReference>
<dbReference type="PANTHER" id="PTHR39190:SF1">
    <property type="entry name" value="FLAGELLAR ASSEMBLY FACTOR FLIW"/>
    <property type="match status" value="1"/>
</dbReference>
<dbReference type="Pfam" id="PF02623">
    <property type="entry name" value="FliW"/>
    <property type="match status" value="1"/>
</dbReference>
<dbReference type="SUPFAM" id="SSF141457">
    <property type="entry name" value="BH3618-like"/>
    <property type="match status" value="1"/>
</dbReference>
<sequence length="135" mass="15604">MNYFLKAPILGFEHINEVRLEKIDSLFSRLISQTNSPMALDMVLVNPYCLREYSFVIPKYIELLLELDSHSKVEVYCVVVLQKNLEDSMVNFLAPLVFNSKNGFGAQVALSMMDYPDFGFRDPLKSFVIQERERA</sequence>
<accession>B5Z8F0</accession>
<feature type="chain" id="PRO_1000138260" description="Flagellar assembly factor FliW">
    <location>
        <begin position="1"/>
        <end position="135"/>
    </location>
</feature>
<reference key="1">
    <citation type="journal article" date="2009" name="J. Bacteriol.">
        <title>The complete genome sequence of Helicobacter pylori strain G27.</title>
        <authorList>
            <person name="Baltrus D.A."/>
            <person name="Amieva M.R."/>
            <person name="Covacci A."/>
            <person name="Lowe T.M."/>
            <person name="Merrell D.S."/>
            <person name="Ottemann K.M."/>
            <person name="Stein M."/>
            <person name="Salama N.R."/>
            <person name="Guillemin K."/>
        </authorList>
    </citation>
    <scope>NUCLEOTIDE SEQUENCE [LARGE SCALE GENOMIC DNA]</scope>
    <source>
        <strain>G27</strain>
    </source>
</reference>
<proteinExistence type="inferred from homology"/>